<name>RL25_GEOMG</name>
<keyword id="KW-1185">Reference proteome</keyword>
<keyword id="KW-0687">Ribonucleoprotein</keyword>
<keyword id="KW-0689">Ribosomal protein</keyword>
<keyword id="KW-0694">RNA-binding</keyword>
<keyword id="KW-0699">rRNA-binding</keyword>
<sequence length="195" mass="20412">MQQKTISIEQREKAGKGVSRKLRAVGRVPGVVYGKGIEPVAVSVDAKELAAAIVGEGGRNNLISLQGGGSLNGNTVIVADLQKAPLKGTFISVDFHKINMDEKVRVHVPVALIGTALGAKEGGMLELVMHSLDLECLPSQIPEHVEVDVTNLAIGHAIHVGELVLAAGVKALDDPKATIVSVHGKTKEEVTVEEG</sequence>
<protein>
    <recommendedName>
        <fullName evidence="1">Large ribosomal subunit protein bL25</fullName>
    </recommendedName>
    <alternativeName>
        <fullName evidence="2">50S ribosomal protein L25</fullName>
    </alternativeName>
    <alternativeName>
        <fullName evidence="1">General stress protein CTC</fullName>
    </alternativeName>
</protein>
<reference key="1">
    <citation type="journal article" date="2009" name="BMC Microbiol.">
        <title>The genome sequence of Geobacter metallireducens: features of metabolism, physiology and regulation common and dissimilar to Geobacter sulfurreducens.</title>
        <authorList>
            <person name="Aklujkar M."/>
            <person name="Krushkal J."/>
            <person name="DiBartolo G."/>
            <person name="Lapidus A."/>
            <person name="Land M.L."/>
            <person name="Lovley D.R."/>
        </authorList>
    </citation>
    <scope>NUCLEOTIDE SEQUENCE [LARGE SCALE GENOMIC DNA]</scope>
    <source>
        <strain>ATCC 53774 / DSM 7210 / GS-15</strain>
    </source>
</reference>
<evidence type="ECO:0000255" key="1">
    <source>
        <dbReference type="HAMAP-Rule" id="MF_01334"/>
    </source>
</evidence>
<evidence type="ECO:0000305" key="2"/>
<dbReference type="EMBL" id="CP000148">
    <property type="protein sequence ID" value="ABB33065.1"/>
    <property type="molecule type" value="Genomic_DNA"/>
</dbReference>
<dbReference type="RefSeq" id="WP_004514569.1">
    <property type="nucleotide sequence ID" value="NC_007517.1"/>
</dbReference>
<dbReference type="SMR" id="Q39RQ9"/>
<dbReference type="STRING" id="269799.Gmet_2847"/>
<dbReference type="KEGG" id="gme:Gmet_2847"/>
<dbReference type="eggNOG" id="COG1825">
    <property type="taxonomic scope" value="Bacteria"/>
</dbReference>
<dbReference type="HOGENOM" id="CLU_075939_2_1_7"/>
<dbReference type="Proteomes" id="UP000007073">
    <property type="component" value="Chromosome"/>
</dbReference>
<dbReference type="GO" id="GO:0022625">
    <property type="term" value="C:cytosolic large ribosomal subunit"/>
    <property type="evidence" value="ECO:0007669"/>
    <property type="project" value="TreeGrafter"/>
</dbReference>
<dbReference type="GO" id="GO:0008097">
    <property type="term" value="F:5S rRNA binding"/>
    <property type="evidence" value="ECO:0007669"/>
    <property type="project" value="InterPro"/>
</dbReference>
<dbReference type="GO" id="GO:0003735">
    <property type="term" value="F:structural constituent of ribosome"/>
    <property type="evidence" value="ECO:0007669"/>
    <property type="project" value="InterPro"/>
</dbReference>
<dbReference type="GO" id="GO:0006412">
    <property type="term" value="P:translation"/>
    <property type="evidence" value="ECO:0007669"/>
    <property type="project" value="UniProtKB-UniRule"/>
</dbReference>
<dbReference type="CDD" id="cd00495">
    <property type="entry name" value="Ribosomal_L25_TL5_CTC"/>
    <property type="match status" value="1"/>
</dbReference>
<dbReference type="Gene3D" id="2.170.120.20">
    <property type="entry name" value="Ribosomal protein L25, beta domain"/>
    <property type="match status" value="1"/>
</dbReference>
<dbReference type="Gene3D" id="2.40.240.10">
    <property type="entry name" value="Ribosomal Protein L25, Chain P"/>
    <property type="match status" value="1"/>
</dbReference>
<dbReference type="HAMAP" id="MF_01334">
    <property type="entry name" value="Ribosomal_bL25_CTC"/>
    <property type="match status" value="1"/>
</dbReference>
<dbReference type="InterPro" id="IPR020056">
    <property type="entry name" value="Rbsml_bL25/Gln-tRNA_synth_N"/>
</dbReference>
<dbReference type="InterPro" id="IPR011035">
    <property type="entry name" value="Ribosomal_bL25/Gln-tRNA_synth"/>
</dbReference>
<dbReference type="InterPro" id="IPR020057">
    <property type="entry name" value="Ribosomal_bL25_b-dom"/>
</dbReference>
<dbReference type="InterPro" id="IPR037121">
    <property type="entry name" value="Ribosomal_bL25_C"/>
</dbReference>
<dbReference type="InterPro" id="IPR001021">
    <property type="entry name" value="Ribosomal_bL25_long"/>
</dbReference>
<dbReference type="InterPro" id="IPR029751">
    <property type="entry name" value="Ribosomal_L25_dom"/>
</dbReference>
<dbReference type="InterPro" id="IPR020930">
    <property type="entry name" value="Ribosomal_uL5_bac-type"/>
</dbReference>
<dbReference type="NCBIfam" id="TIGR00731">
    <property type="entry name" value="bL25_bact_ctc"/>
    <property type="match status" value="1"/>
</dbReference>
<dbReference type="PANTHER" id="PTHR33284">
    <property type="entry name" value="RIBOSOMAL PROTEIN L25/GLN-TRNA SYNTHETASE, ANTI-CODON-BINDING DOMAIN-CONTAINING PROTEIN"/>
    <property type="match status" value="1"/>
</dbReference>
<dbReference type="PANTHER" id="PTHR33284:SF1">
    <property type="entry name" value="RIBOSOMAL PROTEIN L25_GLN-TRNA SYNTHETASE, ANTI-CODON-BINDING DOMAIN-CONTAINING PROTEIN"/>
    <property type="match status" value="1"/>
</dbReference>
<dbReference type="Pfam" id="PF01386">
    <property type="entry name" value="Ribosomal_L25p"/>
    <property type="match status" value="1"/>
</dbReference>
<dbReference type="Pfam" id="PF14693">
    <property type="entry name" value="Ribosomal_TL5_C"/>
    <property type="match status" value="1"/>
</dbReference>
<dbReference type="SUPFAM" id="SSF50715">
    <property type="entry name" value="Ribosomal protein L25-like"/>
    <property type="match status" value="1"/>
</dbReference>
<organism>
    <name type="scientific">Geobacter metallireducens (strain ATCC 53774 / DSM 7210 / GS-15)</name>
    <dbReference type="NCBI Taxonomy" id="269799"/>
    <lineage>
        <taxon>Bacteria</taxon>
        <taxon>Pseudomonadati</taxon>
        <taxon>Thermodesulfobacteriota</taxon>
        <taxon>Desulfuromonadia</taxon>
        <taxon>Geobacterales</taxon>
        <taxon>Geobacteraceae</taxon>
        <taxon>Geobacter</taxon>
    </lineage>
</organism>
<gene>
    <name evidence="1" type="primary">rplY</name>
    <name evidence="1" type="synonym">ctc</name>
    <name type="ordered locus">Gmet_2847</name>
</gene>
<accession>Q39RQ9</accession>
<comment type="function">
    <text evidence="1">This is one of the proteins that binds to the 5S RNA in the ribosome where it forms part of the central protuberance.</text>
</comment>
<comment type="subunit">
    <text evidence="1">Part of the 50S ribosomal subunit; part of the 5S rRNA/L5/L18/L25 subcomplex. Contacts the 5S rRNA. Binds to the 5S rRNA independently of L5 and L18.</text>
</comment>
<comment type="similarity">
    <text evidence="1">Belongs to the bacterial ribosomal protein bL25 family. CTC subfamily.</text>
</comment>
<proteinExistence type="inferred from homology"/>
<feature type="chain" id="PRO_0000244212" description="Large ribosomal subunit protein bL25">
    <location>
        <begin position="1"/>
        <end position="195"/>
    </location>
</feature>